<keyword id="KW-0687">Ribonucleoprotein</keyword>
<keyword id="KW-0689">Ribosomal protein</keyword>
<keyword id="KW-0694">RNA-binding</keyword>
<keyword id="KW-0699">rRNA-binding</keyword>
<dbReference type="EMBL" id="CP000241">
    <property type="protein sequence ID" value="ABF85314.1"/>
    <property type="molecule type" value="Genomic_DNA"/>
</dbReference>
<dbReference type="SMR" id="Q1CRV8"/>
<dbReference type="KEGG" id="hpa:HPAG1_1247"/>
<dbReference type="HOGENOM" id="CLU_065898_2_2_7"/>
<dbReference type="GO" id="GO:0015935">
    <property type="term" value="C:small ribosomal subunit"/>
    <property type="evidence" value="ECO:0007669"/>
    <property type="project" value="InterPro"/>
</dbReference>
<dbReference type="GO" id="GO:0019843">
    <property type="term" value="F:rRNA binding"/>
    <property type="evidence" value="ECO:0007669"/>
    <property type="project" value="UniProtKB-UniRule"/>
</dbReference>
<dbReference type="GO" id="GO:0003735">
    <property type="term" value="F:structural constituent of ribosome"/>
    <property type="evidence" value="ECO:0007669"/>
    <property type="project" value="InterPro"/>
</dbReference>
<dbReference type="GO" id="GO:0006412">
    <property type="term" value="P:translation"/>
    <property type="evidence" value="ECO:0007669"/>
    <property type="project" value="UniProtKB-UniRule"/>
</dbReference>
<dbReference type="FunFam" id="3.30.160.20:FF:000001">
    <property type="entry name" value="30S ribosomal protein S5"/>
    <property type="match status" value="1"/>
</dbReference>
<dbReference type="FunFam" id="3.30.230.10:FF:000024">
    <property type="entry name" value="30S ribosomal protein S5"/>
    <property type="match status" value="1"/>
</dbReference>
<dbReference type="Gene3D" id="3.30.160.20">
    <property type="match status" value="1"/>
</dbReference>
<dbReference type="Gene3D" id="3.30.230.10">
    <property type="match status" value="1"/>
</dbReference>
<dbReference type="HAMAP" id="MF_01307_B">
    <property type="entry name" value="Ribosomal_uS5_B"/>
    <property type="match status" value="1"/>
</dbReference>
<dbReference type="InterPro" id="IPR020568">
    <property type="entry name" value="Ribosomal_Su5_D2-typ_SF"/>
</dbReference>
<dbReference type="InterPro" id="IPR000851">
    <property type="entry name" value="Ribosomal_uS5"/>
</dbReference>
<dbReference type="InterPro" id="IPR005712">
    <property type="entry name" value="Ribosomal_uS5_bac-type"/>
</dbReference>
<dbReference type="InterPro" id="IPR005324">
    <property type="entry name" value="Ribosomal_uS5_C"/>
</dbReference>
<dbReference type="InterPro" id="IPR013810">
    <property type="entry name" value="Ribosomal_uS5_N"/>
</dbReference>
<dbReference type="InterPro" id="IPR018192">
    <property type="entry name" value="Ribosomal_uS5_N_CS"/>
</dbReference>
<dbReference type="InterPro" id="IPR014721">
    <property type="entry name" value="Ribsml_uS5_D2-typ_fold_subgr"/>
</dbReference>
<dbReference type="NCBIfam" id="TIGR01021">
    <property type="entry name" value="rpsE_bact"/>
    <property type="match status" value="1"/>
</dbReference>
<dbReference type="PANTHER" id="PTHR48277">
    <property type="entry name" value="MITOCHONDRIAL RIBOSOMAL PROTEIN S5"/>
    <property type="match status" value="1"/>
</dbReference>
<dbReference type="PANTHER" id="PTHR48277:SF1">
    <property type="entry name" value="MITOCHONDRIAL RIBOSOMAL PROTEIN S5"/>
    <property type="match status" value="1"/>
</dbReference>
<dbReference type="Pfam" id="PF00333">
    <property type="entry name" value="Ribosomal_S5"/>
    <property type="match status" value="1"/>
</dbReference>
<dbReference type="Pfam" id="PF03719">
    <property type="entry name" value="Ribosomal_S5_C"/>
    <property type="match status" value="1"/>
</dbReference>
<dbReference type="SUPFAM" id="SSF54768">
    <property type="entry name" value="dsRNA-binding domain-like"/>
    <property type="match status" value="1"/>
</dbReference>
<dbReference type="SUPFAM" id="SSF54211">
    <property type="entry name" value="Ribosomal protein S5 domain 2-like"/>
    <property type="match status" value="1"/>
</dbReference>
<dbReference type="PROSITE" id="PS00585">
    <property type="entry name" value="RIBOSOMAL_S5"/>
    <property type="match status" value="1"/>
</dbReference>
<dbReference type="PROSITE" id="PS50881">
    <property type="entry name" value="S5_DSRBD"/>
    <property type="match status" value="1"/>
</dbReference>
<proteinExistence type="inferred from homology"/>
<organism>
    <name type="scientific">Helicobacter pylori (strain HPAG1)</name>
    <dbReference type="NCBI Taxonomy" id="357544"/>
    <lineage>
        <taxon>Bacteria</taxon>
        <taxon>Pseudomonadati</taxon>
        <taxon>Campylobacterota</taxon>
        <taxon>Epsilonproteobacteria</taxon>
        <taxon>Campylobacterales</taxon>
        <taxon>Helicobacteraceae</taxon>
        <taxon>Helicobacter</taxon>
    </lineage>
</organism>
<evidence type="ECO:0000255" key="1">
    <source>
        <dbReference type="HAMAP-Rule" id="MF_01307"/>
    </source>
</evidence>
<evidence type="ECO:0000305" key="2"/>
<name>RS5_HELPH</name>
<comment type="function">
    <text evidence="1">With S4 and S12 plays an important role in translational accuracy.</text>
</comment>
<comment type="function">
    <text evidence="1">Located at the back of the 30S subunit body where it stabilizes the conformation of the head with respect to the body.</text>
</comment>
<comment type="subunit">
    <text evidence="1">Part of the 30S ribosomal subunit. Contacts proteins S4 and S8.</text>
</comment>
<comment type="domain">
    <text>The N-terminal domain interacts with the head of the 30S subunit; the C-terminal domain interacts with the body and contacts protein S4. The interaction surface between S4 and S5 is involved in control of translational fidelity.</text>
</comment>
<comment type="similarity">
    <text evidence="1">Belongs to the universal ribosomal protein uS5 family.</text>
</comment>
<reference key="1">
    <citation type="journal article" date="2006" name="Proc. Natl. Acad. Sci. U.S.A.">
        <title>The complete genome sequence of a chronic atrophic gastritis Helicobacter pylori strain: evolution during disease progression.</title>
        <authorList>
            <person name="Oh J.D."/>
            <person name="Kling-Baeckhed H."/>
            <person name="Giannakis M."/>
            <person name="Xu J."/>
            <person name="Fulton R.S."/>
            <person name="Fulton L.A."/>
            <person name="Cordum H.S."/>
            <person name="Wang C."/>
            <person name="Elliott G."/>
            <person name="Edwards J."/>
            <person name="Mardis E.R."/>
            <person name="Engstrand L.G."/>
            <person name="Gordon J.I."/>
        </authorList>
    </citation>
    <scope>NUCLEOTIDE SEQUENCE [LARGE SCALE GENOMIC DNA]</scope>
    <source>
        <strain>HPAG1</strain>
    </source>
</reference>
<sequence>MTERKGMEEINREEFQEVVVNIGRVTKVVKGGRRFRFNALVVVGNKNGLVGFGLGKAKEVPDAIKKAVDDAFKNLIHVTIKGTTIAHDIEHKYNASRILLKPASEGTGVIAGGSTRPIVELAGIKDILTKSLGSNNPYNVVRATFDALAKIKA</sequence>
<feature type="chain" id="PRO_0000323135" description="Small ribosomal subunit protein uS5">
    <location>
        <begin position="1"/>
        <end position="153"/>
    </location>
</feature>
<feature type="domain" description="S5 DRBM" evidence="1">
    <location>
        <begin position="15"/>
        <end position="78"/>
    </location>
</feature>
<accession>Q1CRV8</accession>
<protein>
    <recommendedName>
        <fullName evidence="1">Small ribosomal subunit protein uS5</fullName>
    </recommendedName>
    <alternativeName>
        <fullName evidence="2">30S ribosomal protein S5</fullName>
    </alternativeName>
</protein>
<gene>
    <name evidence="1" type="primary">rpsE</name>
    <name type="ordered locus">HPAG1_1247</name>
</gene>